<reference key="1">
    <citation type="journal article" date="1991" name="Virology">
        <title>Complete nucleotide sequence of the virus SSV1 of the archaebacterium Sulfolobus shibatae.</title>
        <authorList>
            <person name="Palm P."/>
            <person name="Schleper C."/>
            <person name="Grampp B."/>
            <person name="Yeats S."/>
            <person name="McWilliam P."/>
            <person name="Reiter W.-D."/>
            <person name="Zillig W."/>
        </authorList>
    </citation>
    <scope>NUCLEOTIDE SEQUENCE [GENOMIC DNA]</scope>
</reference>
<organism>
    <name type="scientific">Sulfolobus spindle-shape virus 1</name>
    <name type="common">SSV1</name>
    <dbReference type="NCBI Taxonomy" id="244589"/>
    <lineage>
        <taxon>Viruses</taxon>
        <taxon>Viruses incertae sedis</taxon>
        <taxon>Fuselloviridae</taxon>
        <taxon>Alphafusellovirus</taxon>
    </lineage>
</organism>
<name>C124_SSV1</name>
<dbReference type="EMBL" id="X07234">
    <property type="protein sequence ID" value="CAA30199.1"/>
    <property type="molecule type" value="Genomic_DNA"/>
</dbReference>
<dbReference type="PIR" id="S03231">
    <property type="entry name" value="S03231"/>
</dbReference>
<dbReference type="RefSeq" id="NP_039797.1">
    <property type="nucleotide sequence ID" value="NC_001338.1"/>
</dbReference>
<dbReference type="SMR" id="P20208"/>
<dbReference type="KEGG" id="vg:2559653"/>
<dbReference type="Proteomes" id="UP000000854">
    <property type="component" value="Genome"/>
</dbReference>
<feature type="chain" id="PRO_0000223020" description="Uncharacterized protein C-124">
    <location>
        <begin position="1"/>
        <end position="124"/>
    </location>
</feature>
<sequence>MKKLFTVVGSIFSGLGIWLKSIDQSFYLTKVLYNGKVIEIVLTPETNEVVKSSNGVMNASVTSLPSTILYQAQSVPSINGGTLSVINTTVQPPWYANLWPEVLTIGIVMLGIAIFSWIKLKFRR</sequence>
<accession>P20208</accession>
<organismHost>
    <name type="scientific">Saccharolobus solfataricus</name>
    <name type="common">Sulfolobus solfataricus</name>
    <dbReference type="NCBI Taxonomy" id="2287"/>
</organismHost>
<keyword id="KW-1185">Reference proteome</keyword>
<gene>
    <name type="ORF">c124</name>
</gene>
<protein>
    <recommendedName>
        <fullName>Uncharacterized protein C-124</fullName>
    </recommendedName>
</protein>
<comment type="function">
    <text>This protein may be involved in virus assembly.</text>
</comment>
<proteinExistence type="predicted"/>